<sequence length="427" mass="47413">MFFTCGPNEAMVVSGFCRSPPVMVAGGRVFVLPCIQQIQRISLNTLTLNVKSEKVYTRHGVPISVTGIAQVKIQGQNKEMLAAACQMFLGKTEAEIAHIALETLEGHQRAIMAHMTVEEIYKDRQKFSEQVFKVASSDLVNMGISVVSYTLKDIHDDQDYLHSLGKARTAQVQKDARIGEAEAKRDAGIREAKAKQEKVSAQYLSEIEMAKAQRDYELKKAAYDIEVNTRRAQADLAYQLQVAKTKQQIEEQRVQVQVVERAQQVAVQEQEIARREKELEARVRKPAEAERYKLERLAEAEKSQLIMQAEAEAESVRMRGEAEAFAIGARARAEAEQMAKKAEAFQLYQEAAQLDMLLEKLPQVAEEISGPLTSANKITLVSSGSGTMGAAKVTGEVLDILTRLPESVERLTGVSISQVNHKPLRTA</sequence>
<proteinExistence type="inferred from homology"/>
<comment type="function">
    <text evidence="1">May act as a scaffolding protein within caveolar membranes, functionally participating in formation of caveolae or caveolae-like vesicles.</text>
</comment>
<comment type="subunit">
    <text evidence="1">Heterooligomeric complex of flotillin-1 and flotillin-2 and caveolin-1 and caveolin-2. Interacts with ECPAS.</text>
</comment>
<comment type="subcellular location">
    <subcellularLocation>
        <location evidence="3">Cell membrane</location>
        <topology evidence="3">Peripheral membrane protein</topology>
    </subcellularLocation>
    <subcellularLocation>
        <location evidence="3">Endosome</location>
    </subcellularLocation>
    <subcellularLocation>
        <location evidence="2">Membrane</location>
        <location evidence="2">Caveola</location>
        <topology evidence="2">Peripheral membrane protein</topology>
    </subcellularLocation>
    <subcellularLocation>
        <location evidence="3">Melanosome</location>
    </subcellularLocation>
    <subcellularLocation>
        <location evidence="3">Membrane raft</location>
    </subcellularLocation>
    <text evidence="2 3">Identified by mass spectrometry in melanosome fractions from stage I to stage IV. Membrane-associated protein of caveola.</text>
</comment>
<comment type="similarity">
    <text evidence="4">Belongs to the band 7/mec-2 family. Flotillin subfamily.</text>
</comment>
<evidence type="ECO:0000250" key="1"/>
<evidence type="ECO:0000250" key="2">
    <source>
        <dbReference type="UniProtKB" id="O08917"/>
    </source>
</evidence>
<evidence type="ECO:0000250" key="3">
    <source>
        <dbReference type="UniProtKB" id="O75955"/>
    </source>
</evidence>
<evidence type="ECO:0000305" key="4"/>
<reference key="1">
    <citation type="journal article" date="2004" name="Mol. Biol. Evol.">
        <title>Rhesus macaque class I duplicon structures, organization, and evolution within the alpha block of the major histocompatibility complex.</title>
        <authorList>
            <person name="Kulski J.K."/>
            <person name="Anzai T."/>
            <person name="Shiina T."/>
            <person name="Inoko H."/>
        </authorList>
    </citation>
    <scope>NUCLEOTIDE SEQUENCE [LARGE SCALE GENOMIC DNA]</scope>
</reference>
<keyword id="KW-1003">Cell membrane</keyword>
<keyword id="KW-0967">Endosome</keyword>
<keyword id="KW-0472">Membrane</keyword>
<keyword id="KW-0597">Phosphoprotein</keyword>
<keyword id="KW-1185">Reference proteome</keyword>
<dbReference type="EMBL" id="AB128049">
    <property type="protein sequence ID" value="BAD69756.1"/>
    <property type="molecule type" value="Genomic_DNA"/>
</dbReference>
<dbReference type="RefSeq" id="NP_001098638.1">
    <property type="nucleotide sequence ID" value="NM_001105168.1"/>
</dbReference>
<dbReference type="RefSeq" id="XP_014991343.1">
    <property type="nucleotide sequence ID" value="XM_015135857.2"/>
</dbReference>
<dbReference type="SMR" id="Q5TM70"/>
<dbReference type="FunCoup" id="Q5TM70">
    <property type="interactions" value="1185"/>
</dbReference>
<dbReference type="STRING" id="9544.ENSMMUP00000018495"/>
<dbReference type="Ensembl" id="ENSMMUT00000019754.4">
    <property type="protein sequence ID" value="ENSMMUP00000018494.3"/>
    <property type="gene ID" value="ENSMMUG00000014071.4"/>
</dbReference>
<dbReference type="Ensembl" id="ENSMMUT00000109749.1">
    <property type="protein sequence ID" value="ENSMMUP00000077941.1"/>
    <property type="gene ID" value="ENSMMUG00000014071.4"/>
</dbReference>
<dbReference type="GeneID" id="714175"/>
<dbReference type="KEGG" id="mcc:714175"/>
<dbReference type="CTD" id="10211"/>
<dbReference type="VEuPathDB" id="HostDB:ENSMMUG00000014071"/>
<dbReference type="VGNC" id="VGNC:72674">
    <property type="gene designation" value="FLOT1"/>
</dbReference>
<dbReference type="GeneTree" id="ENSGT00560000077232"/>
<dbReference type="InParanoid" id="Q5TM70"/>
<dbReference type="OrthoDB" id="6080404at2759"/>
<dbReference type="Proteomes" id="UP000006718">
    <property type="component" value="Chromosome 4"/>
</dbReference>
<dbReference type="Bgee" id="ENSMMUG00000014071">
    <property type="expression patterns" value="Expressed in superior frontal gyrus and 22 other cell types or tissues"/>
</dbReference>
<dbReference type="ExpressionAtlas" id="Q5TM70">
    <property type="expression patterns" value="baseline"/>
</dbReference>
<dbReference type="GO" id="GO:0031410">
    <property type="term" value="C:cytoplasmic vesicle"/>
    <property type="evidence" value="ECO:0000318"/>
    <property type="project" value="GO_Central"/>
</dbReference>
<dbReference type="GO" id="GO:0005768">
    <property type="term" value="C:endosome"/>
    <property type="evidence" value="ECO:0000250"/>
    <property type="project" value="UniProtKB"/>
</dbReference>
<dbReference type="GO" id="GO:0016600">
    <property type="term" value="C:flotillin complex"/>
    <property type="evidence" value="ECO:0000318"/>
    <property type="project" value="GO_Central"/>
</dbReference>
<dbReference type="GO" id="GO:0042470">
    <property type="term" value="C:melanosome"/>
    <property type="evidence" value="ECO:0007669"/>
    <property type="project" value="UniProtKB-SubCell"/>
</dbReference>
<dbReference type="GO" id="GO:0045121">
    <property type="term" value="C:membrane raft"/>
    <property type="evidence" value="ECO:0000250"/>
    <property type="project" value="UniProtKB"/>
</dbReference>
<dbReference type="GO" id="GO:0005886">
    <property type="term" value="C:plasma membrane"/>
    <property type="evidence" value="ECO:0000318"/>
    <property type="project" value="GO_Central"/>
</dbReference>
<dbReference type="GO" id="GO:0002020">
    <property type="term" value="F:protease binding"/>
    <property type="evidence" value="ECO:0000318"/>
    <property type="project" value="GO_Central"/>
</dbReference>
<dbReference type="GO" id="GO:1901890">
    <property type="term" value="P:positive regulation of cell junction assembly"/>
    <property type="evidence" value="ECO:0000318"/>
    <property type="project" value="GO_Central"/>
</dbReference>
<dbReference type="GO" id="GO:2000049">
    <property type="term" value="P:positive regulation of cell-cell adhesion mediated by cadherin"/>
    <property type="evidence" value="ECO:0000318"/>
    <property type="project" value="GO_Central"/>
</dbReference>
<dbReference type="GO" id="GO:0045807">
    <property type="term" value="P:positive regulation of endocytosis"/>
    <property type="evidence" value="ECO:0000318"/>
    <property type="project" value="GO_Central"/>
</dbReference>
<dbReference type="GO" id="GO:0072659">
    <property type="term" value="P:protein localization to plasma membrane"/>
    <property type="evidence" value="ECO:0000318"/>
    <property type="project" value="GO_Central"/>
</dbReference>
<dbReference type="GO" id="GO:0002090">
    <property type="term" value="P:regulation of receptor internalization"/>
    <property type="evidence" value="ECO:0000318"/>
    <property type="project" value="GO_Central"/>
</dbReference>
<dbReference type="CDD" id="cd03399">
    <property type="entry name" value="SPFH_flotillin"/>
    <property type="match status" value="1"/>
</dbReference>
<dbReference type="FunFam" id="3.30.479.30:FF:000003">
    <property type="entry name" value="Flotillin 2"/>
    <property type="match status" value="1"/>
</dbReference>
<dbReference type="Gene3D" id="3.30.479.30">
    <property type="entry name" value="Band 7 domain"/>
    <property type="match status" value="1"/>
</dbReference>
<dbReference type="InterPro" id="IPR001107">
    <property type="entry name" value="Band_7"/>
</dbReference>
<dbReference type="InterPro" id="IPR036013">
    <property type="entry name" value="Band_7/SPFH_dom_sf"/>
</dbReference>
<dbReference type="InterPro" id="IPR031905">
    <property type="entry name" value="Flotillin_C"/>
</dbReference>
<dbReference type="InterPro" id="IPR027705">
    <property type="entry name" value="Flotillin_fam"/>
</dbReference>
<dbReference type="PANTHER" id="PTHR13806:SF46">
    <property type="entry name" value="FLOTILLIN-1-RELATED"/>
    <property type="match status" value="1"/>
</dbReference>
<dbReference type="PANTHER" id="PTHR13806">
    <property type="entry name" value="FLOTILLIN-RELATED"/>
    <property type="match status" value="1"/>
</dbReference>
<dbReference type="Pfam" id="PF01145">
    <property type="entry name" value="Band_7"/>
    <property type="match status" value="1"/>
</dbReference>
<dbReference type="Pfam" id="PF15975">
    <property type="entry name" value="Flot"/>
    <property type="match status" value="1"/>
</dbReference>
<dbReference type="SMART" id="SM00244">
    <property type="entry name" value="PHB"/>
    <property type="match status" value="1"/>
</dbReference>
<dbReference type="SUPFAM" id="SSF117892">
    <property type="entry name" value="Band 7/SPFH domain"/>
    <property type="match status" value="1"/>
</dbReference>
<name>FLOT1_MACMU</name>
<gene>
    <name type="primary">FLOT1</name>
</gene>
<organism>
    <name type="scientific">Macaca mulatta</name>
    <name type="common">Rhesus macaque</name>
    <dbReference type="NCBI Taxonomy" id="9544"/>
    <lineage>
        <taxon>Eukaryota</taxon>
        <taxon>Metazoa</taxon>
        <taxon>Chordata</taxon>
        <taxon>Craniata</taxon>
        <taxon>Vertebrata</taxon>
        <taxon>Euteleostomi</taxon>
        <taxon>Mammalia</taxon>
        <taxon>Eutheria</taxon>
        <taxon>Euarchontoglires</taxon>
        <taxon>Primates</taxon>
        <taxon>Haplorrhini</taxon>
        <taxon>Catarrhini</taxon>
        <taxon>Cercopithecidae</taxon>
        <taxon>Cercopithecinae</taxon>
        <taxon>Macaca</taxon>
    </lineage>
</organism>
<protein>
    <recommendedName>
        <fullName>Flotillin-1</fullName>
    </recommendedName>
</protein>
<feature type="chain" id="PRO_0000262589" description="Flotillin-1">
    <location>
        <begin position="1"/>
        <end position="427"/>
    </location>
</feature>
<feature type="modified residue" description="Phosphoserine" evidence="3">
    <location>
        <position position="19"/>
    </location>
</feature>
<feature type="modified residue" description="Phosphoserine" evidence="3">
    <location>
        <position position="163"/>
    </location>
</feature>
<feature type="modified residue" description="Phosphoserine" evidence="3">
    <location>
        <position position="385"/>
    </location>
</feature>
<feature type="modified residue" description="Phosphothreonine" evidence="3">
    <location>
        <position position="387"/>
    </location>
</feature>
<accession>Q5TM70</accession>